<gene>
    <name evidence="1" type="primary">coaD</name>
    <name type="ordered locus">SUB1314</name>
</gene>
<comment type="function">
    <text evidence="1">Reversibly transfers an adenylyl group from ATP to 4'-phosphopantetheine, yielding dephospho-CoA (dPCoA) and pyrophosphate.</text>
</comment>
<comment type="catalytic activity">
    <reaction evidence="1">
        <text>(R)-4'-phosphopantetheine + ATP + H(+) = 3'-dephospho-CoA + diphosphate</text>
        <dbReference type="Rhea" id="RHEA:19801"/>
        <dbReference type="ChEBI" id="CHEBI:15378"/>
        <dbReference type="ChEBI" id="CHEBI:30616"/>
        <dbReference type="ChEBI" id="CHEBI:33019"/>
        <dbReference type="ChEBI" id="CHEBI:57328"/>
        <dbReference type="ChEBI" id="CHEBI:61723"/>
        <dbReference type="EC" id="2.7.7.3"/>
    </reaction>
</comment>
<comment type="cofactor">
    <cofactor evidence="1">
        <name>Mg(2+)</name>
        <dbReference type="ChEBI" id="CHEBI:18420"/>
    </cofactor>
</comment>
<comment type="pathway">
    <text evidence="1">Cofactor biosynthesis; coenzyme A biosynthesis; CoA from (R)-pantothenate: step 4/5.</text>
</comment>
<comment type="subunit">
    <text evidence="1">Homohexamer.</text>
</comment>
<comment type="subcellular location">
    <subcellularLocation>
        <location evidence="1">Cytoplasm</location>
    </subcellularLocation>
</comment>
<comment type="similarity">
    <text evidence="1">Belongs to the bacterial CoaD family.</text>
</comment>
<evidence type="ECO:0000255" key="1">
    <source>
        <dbReference type="HAMAP-Rule" id="MF_00151"/>
    </source>
</evidence>
<feature type="chain" id="PRO_1000123304" description="Phosphopantetheine adenylyltransferase">
    <location>
        <begin position="1"/>
        <end position="166"/>
    </location>
</feature>
<feature type="binding site" evidence="1">
    <location>
        <begin position="11"/>
        <end position="12"/>
    </location>
    <ligand>
        <name>ATP</name>
        <dbReference type="ChEBI" id="CHEBI:30616"/>
    </ligand>
</feature>
<feature type="binding site" evidence="1">
    <location>
        <position position="11"/>
    </location>
    <ligand>
        <name>substrate</name>
    </ligand>
</feature>
<feature type="binding site" evidence="1">
    <location>
        <position position="19"/>
    </location>
    <ligand>
        <name>ATP</name>
        <dbReference type="ChEBI" id="CHEBI:30616"/>
    </ligand>
</feature>
<feature type="binding site" evidence="1">
    <location>
        <position position="43"/>
    </location>
    <ligand>
        <name>substrate</name>
    </ligand>
</feature>
<feature type="binding site" evidence="1">
    <location>
        <position position="76"/>
    </location>
    <ligand>
        <name>substrate</name>
    </ligand>
</feature>
<feature type="binding site" evidence="1">
    <location>
        <position position="90"/>
    </location>
    <ligand>
        <name>substrate</name>
    </ligand>
</feature>
<feature type="binding site" evidence="1">
    <location>
        <begin position="91"/>
        <end position="93"/>
    </location>
    <ligand>
        <name>ATP</name>
        <dbReference type="ChEBI" id="CHEBI:30616"/>
    </ligand>
</feature>
<feature type="binding site" evidence="1">
    <location>
        <position position="101"/>
    </location>
    <ligand>
        <name>ATP</name>
        <dbReference type="ChEBI" id="CHEBI:30616"/>
    </ligand>
</feature>
<feature type="binding site" evidence="1">
    <location>
        <begin position="126"/>
        <end position="132"/>
    </location>
    <ligand>
        <name>ATP</name>
        <dbReference type="ChEBI" id="CHEBI:30616"/>
    </ligand>
</feature>
<feature type="site" description="Transition state stabilizer" evidence="1">
    <location>
        <position position="19"/>
    </location>
</feature>
<name>COAD_STRU0</name>
<keyword id="KW-0067">ATP-binding</keyword>
<keyword id="KW-0173">Coenzyme A biosynthesis</keyword>
<keyword id="KW-0963">Cytoplasm</keyword>
<keyword id="KW-0460">Magnesium</keyword>
<keyword id="KW-0547">Nucleotide-binding</keyword>
<keyword id="KW-0548">Nucleotidyltransferase</keyword>
<keyword id="KW-1185">Reference proteome</keyword>
<keyword id="KW-0808">Transferase</keyword>
<protein>
    <recommendedName>
        <fullName evidence="1">Phosphopantetheine adenylyltransferase</fullName>
        <ecNumber evidence="1">2.7.7.3</ecNumber>
    </recommendedName>
    <alternativeName>
        <fullName evidence="1">Dephospho-CoA pyrophosphorylase</fullName>
    </alternativeName>
    <alternativeName>
        <fullName evidence="1">Pantetheine-phosphate adenylyltransferase</fullName>
        <shortName evidence="1">PPAT</shortName>
    </alternativeName>
</protein>
<organism>
    <name type="scientific">Streptococcus uberis (strain ATCC BAA-854 / 0140J)</name>
    <dbReference type="NCBI Taxonomy" id="218495"/>
    <lineage>
        <taxon>Bacteria</taxon>
        <taxon>Bacillati</taxon>
        <taxon>Bacillota</taxon>
        <taxon>Bacilli</taxon>
        <taxon>Lactobacillales</taxon>
        <taxon>Streptococcaceae</taxon>
        <taxon>Streptococcus</taxon>
    </lineage>
</organism>
<dbReference type="EC" id="2.7.7.3" evidence="1"/>
<dbReference type="EMBL" id="AM946015">
    <property type="protein sequence ID" value="CAR42862.1"/>
    <property type="molecule type" value="Genomic_DNA"/>
</dbReference>
<dbReference type="RefSeq" id="WP_015911640.1">
    <property type="nucleotide sequence ID" value="NC_012004.1"/>
</dbReference>
<dbReference type="SMR" id="B9DUX7"/>
<dbReference type="STRING" id="218495.SUB1314"/>
<dbReference type="KEGG" id="sub:SUB1314"/>
<dbReference type="eggNOG" id="COG0669">
    <property type="taxonomic scope" value="Bacteria"/>
</dbReference>
<dbReference type="HOGENOM" id="CLU_100149_0_1_9"/>
<dbReference type="OrthoDB" id="9806661at2"/>
<dbReference type="UniPathway" id="UPA00241">
    <property type="reaction ID" value="UER00355"/>
</dbReference>
<dbReference type="Proteomes" id="UP000000449">
    <property type="component" value="Chromosome"/>
</dbReference>
<dbReference type="GO" id="GO:0005737">
    <property type="term" value="C:cytoplasm"/>
    <property type="evidence" value="ECO:0007669"/>
    <property type="project" value="UniProtKB-SubCell"/>
</dbReference>
<dbReference type="GO" id="GO:0005524">
    <property type="term" value="F:ATP binding"/>
    <property type="evidence" value="ECO:0007669"/>
    <property type="project" value="UniProtKB-KW"/>
</dbReference>
<dbReference type="GO" id="GO:0004595">
    <property type="term" value="F:pantetheine-phosphate adenylyltransferase activity"/>
    <property type="evidence" value="ECO:0007669"/>
    <property type="project" value="UniProtKB-UniRule"/>
</dbReference>
<dbReference type="GO" id="GO:0015937">
    <property type="term" value="P:coenzyme A biosynthetic process"/>
    <property type="evidence" value="ECO:0007669"/>
    <property type="project" value="UniProtKB-UniRule"/>
</dbReference>
<dbReference type="CDD" id="cd02163">
    <property type="entry name" value="PPAT"/>
    <property type="match status" value="1"/>
</dbReference>
<dbReference type="Gene3D" id="3.40.50.620">
    <property type="entry name" value="HUPs"/>
    <property type="match status" value="1"/>
</dbReference>
<dbReference type="HAMAP" id="MF_00151">
    <property type="entry name" value="PPAT_bact"/>
    <property type="match status" value="1"/>
</dbReference>
<dbReference type="InterPro" id="IPR004821">
    <property type="entry name" value="Cyt_trans-like"/>
</dbReference>
<dbReference type="InterPro" id="IPR001980">
    <property type="entry name" value="PPAT"/>
</dbReference>
<dbReference type="InterPro" id="IPR014729">
    <property type="entry name" value="Rossmann-like_a/b/a_fold"/>
</dbReference>
<dbReference type="NCBIfam" id="TIGR01510">
    <property type="entry name" value="coaD_prev_kdtB"/>
    <property type="match status" value="1"/>
</dbReference>
<dbReference type="NCBIfam" id="TIGR00125">
    <property type="entry name" value="cyt_tran_rel"/>
    <property type="match status" value="1"/>
</dbReference>
<dbReference type="PANTHER" id="PTHR21342">
    <property type="entry name" value="PHOSPHOPANTETHEINE ADENYLYLTRANSFERASE"/>
    <property type="match status" value="1"/>
</dbReference>
<dbReference type="PANTHER" id="PTHR21342:SF1">
    <property type="entry name" value="PHOSPHOPANTETHEINE ADENYLYLTRANSFERASE"/>
    <property type="match status" value="1"/>
</dbReference>
<dbReference type="Pfam" id="PF01467">
    <property type="entry name" value="CTP_transf_like"/>
    <property type="match status" value="1"/>
</dbReference>
<dbReference type="PRINTS" id="PR01020">
    <property type="entry name" value="LPSBIOSNTHSS"/>
</dbReference>
<dbReference type="SUPFAM" id="SSF52374">
    <property type="entry name" value="Nucleotidylyl transferase"/>
    <property type="match status" value="1"/>
</dbReference>
<reference key="1">
    <citation type="journal article" date="2009" name="BMC Genomics">
        <title>Evidence for niche adaptation in the genome of the bovine pathogen Streptococcus uberis.</title>
        <authorList>
            <person name="Ward P.N."/>
            <person name="Holden M.T.G."/>
            <person name="Leigh J.A."/>
            <person name="Lennard N."/>
            <person name="Bignell A."/>
            <person name="Barron A."/>
            <person name="Clark L."/>
            <person name="Quail M.A."/>
            <person name="Woodward J."/>
            <person name="Barrell B.G."/>
            <person name="Egan S.A."/>
            <person name="Field T.R."/>
            <person name="Maskell D."/>
            <person name="Kehoe M."/>
            <person name="Dowson C.G."/>
            <person name="Chanter N."/>
            <person name="Whatmore A.M."/>
            <person name="Bentley S.D."/>
            <person name="Parkhill J."/>
        </authorList>
    </citation>
    <scope>NUCLEOTIDE SEQUENCE [LARGE SCALE GENOMIC DNA]</scope>
    <source>
        <strain>ATCC BAA-854 / 0140J</strain>
    </source>
</reference>
<accession>B9DUX7</accession>
<proteinExistence type="inferred from homology"/>
<sequence length="166" mass="18672">MSDKIGLYSGSFDPVTNGHMDIIARASQLFDHLYIGVFFNPEKKGFFDLETRINVLKEALVDYPNISVVSAADSLAVDLAKSLGVTHMVRGLRNPTDFEYESNLEFFNNRLDPSIDTIYFIAHNLMQPISSSRVKELIHFNSSIEGLVPQSVIKQLESMNESNQNL</sequence>